<dbReference type="EMBL" id="CU928162">
    <property type="protein sequence ID" value="CAR09857.2"/>
    <property type="molecule type" value="Genomic_DNA"/>
</dbReference>
<dbReference type="RefSeq" id="WP_001314167.1">
    <property type="nucleotide sequence ID" value="NC_011745.1"/>
</dbReference>
<dbReference type="SMR" id="B7N0I9"/>
<dbReference type="KEGG" id="ecq:ECED1_3708"/>
<dbReference type="HOGENOM" id="CLU_015114_1_3_6"/>
<dbReference type="Proteomes" id="UP000000748">
    <property type="component" value="Chromosome"/>
</dbReference>
<dbReference type="GO" id="GO:0005886">
    <property type="term" value="C:plasma membrane"/>
    <property type="evidence" value="ECO:0007669"/>
    <property type="project" value="UniProtKB-SubCell"/>
</dbReference>
<dbReference type="GO" id="GO:0046872">
    <property type="term" value="F:metal ion binding"/>
    <property type="evidence" value="ECO:0007669"/>
    <property type="project" value="UniProtKB-KW"/>
</dbReference>
<dbReference type="GO" id="GO:0005385">
    <property type="term" value="F:zinc ion transmembrane transporter activity"/>
    <property type="evidence" value="ECO:0007669"/>
    <property type="project" value="UniProtKB-UniRule"/>
</dbReference>
<dbReference type="HAMAP" id="MF_00548">
    <property type="entry name" value="ZupT"/>
    <property type="match status" value="1"/>
</dbReference>
<dbReference type="InterPro" id="IPR003689">
    <property type="entry name" value="ZIP"/>
</dbReference>
<dbReference type="InterPro" id="IPR023498">
    <property type="entry name" value="Zn_transptr_ZupT"/>
</dbReference>
<dbReference type="NCBIfam" id="NF003243">
    <property type="entry name" value="PRK04201.1"/>
    <property type="match status" value="1"/>
</dbReference>
<dbReference type="PANTHER" id="PTHR11040:SF205">
    <property type="entry name" value="ZINC TRANSPORTER ZUPT"/>
    <property type="match status" value="1"/>
</dbReference>
<dbReference type="PANTHER" id="PTHR11040">
    <property type="entry name" value="ZINC/IRON TRANSPORTER"/>
    <property type="match status" value="1"/>
</dbReference>
<dbReference type="Pfam" id="PF02535">
    <property type="entry name" value="Zip"/>
    <property type="match status" value="2"/>
</dbReference>
<proteinExistence type="inferred from homology"/>
<keyword id="KW-0997">Cell inner membrane</keyword>
<keyword id="KW-1003">Cell membrane</keyword>
<keyword id="KW-0406">Ion transport</keyword>
<keyword id="KW-0408">Iron</keyword>
<keyword id="KW-0472">Membrane</keyword>
<keyword id="KW-0479">Metal-binding</keyword>
<keyword id="KW-0812">Transmembrane</keyword>
<keyword id="KW-1133">Transmembrane helix</keyword>
<keyword id="KW-0813">Transport</keyword>
<keyword id="KW-0862">Zinc</keyword>
<keyword id="KW-0864">Zinc transport</keyword>
<reference key="1">
    <citation type="journal article" date="2009" name="PLoS Genet.">
        <title>Organised genome dynamics in the Escherichia coli species results in highly diverse adaptive paths.</title>
        <authorList>
            <person name="Touchon M."/>
            <person name="Hoede C."/>
            <person name="Tenaillon O."/>
            <person name="Barbe V."/>
            <person name="Baeriswyl S."/>
            <person name="Bidet P."/>
            <person name="Bingen E."/>
            <person name="Bonacorsi S."/>
            <person name="Bouchier C."/>
            <person name="Bouvet O."/>
            <person name="Calteau A."/>
            <person name="Chiapello H."/>
            <person name="Clermont O."/>
            <person name="Cruveiller S."/>
            <person name="Danchin A."/>
            <person name="Diard M."/>
            <person name="Dossat C."/>
            <person name="Karoui M.E."/>
            <person name="Frapy E."/>
            <person name="Garry L."/>
            <person name="Ghigo J.M."/>
            <person name="Gilles A.M."/>
            <person name="Johnson J."/>
            <person name="Le Bouguenec C."/>
            <person name="Lescat M."/>
            <person name="Mangenot S."/>
            <person name="Martinez-Jehanne V."/>
            <person name="Matic I."/>
            <person name="Nassif X."/>
            <person name="Oztas S."/>
            <person name="Petit M.A."/>
            <person name="Pichon C."/>
            <person name="Rouy Z."/>
            <person name="Ruf C.S."/>
            <person name="Schneider D."/>
            <person name="Tourret J."/>
            <person name="Vacherie B."/>
            <person name="Vallenet D."/>
            <person name="Medigue C."/>
            <person name="Rocha E.P.C."/>
            <person name="Denamur E."/>
        </authorList>
    </citation>
    <scope>NUCLEOTIDE SEQUENCE [LARGE SCALE GENOMIC DNA]</scope>
    <source>
        <strain>ED1a</strain>
    </source>
</reference>
<feature type="chain" id="PRO_1000200395" description="Zinc transporter ZupT">
    <location>
        <begin position="1"/>
        <end position="257"/>
    </location>
</feature>
<feature type="transmembrane region" description="Helical" evidence="1">
    <location>
        <begin position="5"/>
        <end position="25"/>
    </location>
</feature>
<feature type="transmembrane region" description="Helical" evidence="1">
    <location>
        <begin position="32"/>
        <end position="52"/>
    </location>
</feature>
<feature type="transmembrane region" description="Helical" evidence="1">
    <location>
        <begin position="61"/>
        <end position="81"/>
    </location>
</feature>
<feature type="transmembrane region" description="Helical" evidence="1">
    <location>
        <begin position="137"/>
        <end position="157"/>
    </location>
</feature>
<feature type="transmembrane region" description="Helical" evidence="1">
    <location>
        <begin position="171"/>
        <end position="191"/>
    </location>
</feature>
<feature type="transmembrane region" description="Helical" evidence="1">
    <location>
        <begin position="195"/>
        <end position="215"/>
    </location>
</feature>
<feature type="transmembrane region" description="Helical" evidence="1">
    <location>
        <begin position="236"/>
        <end position="256"/>
    </location>
</feature>
<feature type="binding site" description="M2 metal binding site" evidence="1">
    <location>
        <position position="120"/>
    </location>
    <ligand>
        <name>Fe(2+)</name>
        <dbReference type="ChEBI" id="CHEBI:29033"/>
    </ligand>
</feature>
<feature type="binding site" description="M2 metal binding site" evidence="1">
    <location>
        <position position="123"/>
    </location>
    <ligand>
        <name>Fe(2+)</name>
        <dbReference type="ChEBI" id="CHEBI:29033"/>
    </ligand>
</feature>
<feature type="binding site" description="M1 metal binding site" evidence="1">
    <location>
        <position position="123"/>
    </location>
    <ligand>
        <name>Zn(2+)</name>
        <dbReference type="ChEBI" id="CHEBI:29105"/>
    </ligand>
</feature>
<feature type="binding site" description="M1 metal binding site" evidence="1">
    <location>
        <position position="148"/>
    </location>
    <ligand>
        <name>Zn(2+)</name>
        <dbReference type="ChEBI" id="CHEBI:29105"/>
    </ligand>
</feature>
<feature type="binding site" description="M2 metal binding site" evidence="1">
    <location>
        <position position="149"/>
    </location>
    <ligand>
        <name>Fe(2+)</name>
        <dbReference type="ChEBI" id="CHEBI:29033"/>
    </ligand>
</feature>
<feature type="binding site" description="M2 metal binding site" evidence="1">
    <location>
        <position position="152"/>
    </location>
    <ligand>
        <name>Fe(2+)</name>
        <dbReference type="ChEBI" id="CHEBI:29033"/>
    </ligand>
</feature>
<feature type="binding site" description="M1 metal binding site" evidence="1">
    <location>
        <position position="152"/>
    </location>
    <ligand>
        <name>Zn(2+)</name>
        <dbReference type="ChEBI" id="CHEBI:29105"/>
    </ligand>
</feature>
<feature type="binding site" description="M2 metal binding site" evidence="1">
    <location>
        <position position="181"/>
    </location>
    <ligand>
        <name>Fe(2+)</name>
        <dbReference type="ChEBI" id="CHEBI:29033"/>
    </ligand>
</feature>
<organism>
    <name type="scientific">Escherichia coli O81 (strain ED1a)</name>
    <dbReference type="NCBI Taxonomy" id="585397"/>
    <lineage>
        <taxon>Bacteria</taxon>
        <taxon>Pseudomonadati</taxon>
        <taxon>Pseudomonadota</taxon>
        <taxon>Gammaproteobacteria</taxon>
        <taxon>Enterobacterales</taxon>
        <taxon>Enterobacteriaceae</taxon>
        <taxon>Escherichia</taxon>
    </lineage>
</organism>
<evidence type="ECO:0000255" key="1">
    <source>
        <dbReference type="HAMAP-Rule" id="MF_00548"/>
    </source>
</evidence>
<comment type="function">
    <text evidence="1">Mediates zinc uptake. May also transport other divalent cations.</text>
</comment>
<comment type="catalytic activity">
    <reaction evidence="1">
        <text>Zn(2+)(in) = Zn(2+)(out)</text>
        <dbReference type="Rhea" id="RHEA:29351"/>
        <dbReference type="ChEBI" id="CHEBI:29105"/>
    </reaction>
</comment>
<comment type="subcellular location">
    <subcellularLocation>
        <location evidence="1">Cell inner membrane</location>
        <topology evidence="1">Multi-pass membrane protein</topology>
    </subcellularLocation>
</comment>
<comment type="similarity">
    <text evidence="1">Belongs to the ZIP transporter (TC 2.A.5) family. ZupT subfamily.</text>
</comment>
<name>ZUPT_ECO81</name>
<accession>B7N0I9</accession>
<gene>
    <name evidence="1" type="primary">zupT</name>
    <name type="ordered locus">ECED1_3708</name>
</gene>
<protein>
    <recommendedName>
        <fullName evidence="1">Zinc transporter ZupT</fullName>
    </recommendedName>
</protein>
<sequence>MSVPLILTILAGAATFIGAFLGVLGQKPSNRLLAFSLGFAAGIMLLISLMEMLPAALAAEGMSPVLGYGMFIFGLLGYFGLDRMLPHAHPQDLMQKSVQPLPKSIKRTAILLTLGISLHNFPEGIATFVTASSNLELGFGIALAVALHNIPEGLAVAGPVYAATGSKRTAILWAGISGLAEILGGVLAWLILGSMISPVVMAAIMAAVAGIMVALSVDELMPLAKEIDPNNNPSYGVLCGMSVMGFSLVLLQTVGIG</sequence>